<reference key="1">
    <citation type="journal article" date="2009" name="Appl. Environ. Microbiol.">
        <title>Rhizobium sp. strain NGR234 possesses a remarkable number of secretion systems.</title>
        <authorList>
            <person name="Schmeisser C."/>
            <person name="Liesegang H."/>
            <person name="Krysciak D."/>
            <person name="Bakkou N."/>
            <person name="Le Quere A."/>
            <person name="Wollherr A."/>
            <person name="Heinemeyer I."/>
            <person name="Morgenstern B."/>
            <person name="Pommerening-Roeser A."/>
            <person name="Flores M."/>
            <person name="Palacios R."/>
            <person name="Brenner S."/>
            <person name="Gottschalk G."/>
            <person name="Schmitz R.A."/>
            <person name="Broughton W.J."/>
            <person name="Perret X."/>
            <person name="Strittmatter A.W."/>
            <person name="Streit W.R."/>
        </authorList>
    </citation>
    <scope>NUCLEOTIDE SEQUENCE [LARGE SCALE GENOMIC DNA]</scope>
    <source>
        <strain>NBRC 101917 / NGR234</strain>
    </source>
</reference>
<evidence type="ECO:0000255" key="1">
    <source>
        <dbReference type="HAMAP-Rule" id="MF_01547"/>
    </source>
</evidence>
<evidence type="ECO:0000256" key="2">
    <source>
        <dbReference type="SAM" id="MobiDB-lite"/>
    </source>
</evidence>
<organism>
    <name type="scientific">Sinorhizobium fredii (strain NBRC 101917 / NGR234)</name>
    <dbReference type="NCBI Taxonomy" id="394"/>
    <lineage>
        <taxon>Bacteria</taxon>
        <taxon>Pseudomonadati</taxon>
        <taxon>Pseudomonadota</taxon>
        <taxon>Alphaproteobacteria</taxon>
        <taxon>Hyphomicrobiales</taxon>
        <taxon>Rhizobiaceae</taxon>
        <taxon>Sinorhizobium/Ensifer group</taxon>
        <taxon>Sinorhizobium</taxon>
    </lineage>
</organism>
<keyword id="KW-0963">Cytoplasm</keyword>
<keyword id="KW-0489">Methyltransferase</keyword>
<keyword id="KW-1185">Reference proteome</keyword>
<keyword id="KW-0698">rRNA processing</keyword>
<keyword id="KW-0949">S-adenosyl-L-methionine</keyword>
<keyword id="KW-0808">Transferase</keyword>
<accession>C3MGQ4</accession>
<protein>
    <recommendedName>
        <fullName evidence="1">Ribosomal RNA large subunit methyltransferase E</fullName>
        <ecNumber evidence="1">2.1.1.166</ecNumber>
    </recommendedName>
    <alternativeName>
        <fullName evidence="1">23S rRNA Um2552 methyltransferase</fullName>
    </alternativeName>
    <alternativeName>
        <fullName evidence="1">rRNA (uridine-2'-O-)-methyltransferase</fullName>
    </alternativeName>
</protein>
<dbReference type="EC" id="2.1.1.166" evidence="1"/>
<dbReference type="EMBL" id="CP001389">
    <property type="protein sequence ID" value="ACP24169.1"/>
    <property type="molecule type" value="Genomic_DNA"/>
</dbReference>
<dbReference type="RefSeq" id="WP_012706954.1">
    <property type="nucleotide sequence ID" value="NC_012587.1"/>
</dbReference>
<dbReference type="RefSeq" id="YP_002824922.1">
    <property type="nucleotide sequence ID" value="NC_012587.1"/>
</dbReference>
<dbReference type="SMR" id="C3MGQ4"/>
<dbReference type="STRING" id="394.NGR_c03730"/>
<dbReference type="KEGG" id="rhi:NGR_c03730"/>
<dbReference type="PATRIC" id="fig|394.7.peg.3178"/>
<dbReference type="eggNOG" id="COG0293">
    <property type="taxonomic scope" value="Bacteria"/>
</dbReference>
<dbReference type="HOGENOM" id="CLU_009422_4_0_5"/>
<dbReference type="OrthoDB" id="9790080at2"/>
<dbReference type="Proteomes" id="UP000001054">
    <property type="component" value="Chromosome"/>
</dbReference>
<dbReference type="GO" id="GO:0005737">
    <property type="term" value="C:cytoplasm"/>
    <property type="evidence" value="ECO:0007669"/>
    <property type="project" value="UniProtKB-SubCell"/>
</dbReference>
<dbReference type="GO" id="GO:0008650">
    <property type="term" value="F:rRNA (uridine-2'-O-)-methyltransferase activity"/>
    <property type="evidence" value="ECO:0007669"/>
    <property type="project" value="UniProtKB-UniRule"/>
</dbReference>
<dbReference type="CDD" id="cd02440">
    <property type="entry name" value="AdoMet_MTases"/>
    <property type="match status" value="1"/>
</dbReference>
<dbReference type="Gene3D" id="3.40.50.150">
    <property type="entry name" value="Vaccinia Virus protein VP39"/>
    <property type="match status" value="1"/>
</dbReference>
<dbReference type="HAMAP" id="MF_01547">
    <property type="entry name" value="RNA_methyltr_E"/>
    <property type="match status" value="1"/>
</dbReference>
<dbReference type="InterPro" id="IPR050082">
    <property type="entry name" value="RNA_methyltr_RlmE"/>
</dbReference>
<dbReference type="InterPro" id="IPR002877">
    <property type="entry name" value="RNA_MeTrfase_FtsJ_dom"/>
</dbReference>
<dbReference type="InterPro" id="IPR015507">
    <property type="entry name" value="rRNA-MeTfrase_E"/>
</dbReference>
<dbReference type="InterPro" id="IPR029063">
    <property type="entry name" value="SAM-dependent_MTases_sf"/>
</dbReference>
<dbReference type="PANTHER" id="PTHR10920">
    <property type="entry name" value="RIBOSOMAL RNA METHYLTRANSFERASE"/>
    <property type="match status" value="1"/>
</dbReference>
<dbReference type="PANTHER" id="PTHR10920:SF18">
    <property type="entry name" value="RRNA METHYLTRANSFERASE 2, MITOCHONDRIAL"/>
    <property type="match status" value="1"/>
</dbReference>
<dbReference type="Pfam" id="PF01728">
    <property type="entry name" value="FtsJ"/>
    <property type="match status" value="1"/>
</dbReference>
<dbReference type="PIRSF" id="PIRSF005461">
    <property type="entry name" value="23S_rRNA_mtase"/>
    <property type="match status" value="1"/>
</dbReference>
<dbReference type="SUPFAM" id="SSF53335">
    <property type="entry name" value="S-adenosyl-L-methionine-dependent methyltransferases"/>
    <property type="match status" value="1"/>
</dbReference>
<gene>
    <name evidence="1" type="primary">rlmE</name>
    <name evidence="1" type="synonym">ftsJ</name>
    <name evidence="1" type="synonym">rrmJ</name>
    <name type="ordered locus">NGR_c03730</name>
</gene>
<name>RLME_SINFN</name>
<proteinExistence type="inferred from homology"/>
<feature type="chain" id="PRO_1000185300" description="Ribosomal RNA large subunit methyltransferase E">
    <location>
        <begin position="1"/>
        <end position="245"/>
    </location>
</feature>
<feature type="region of interest" description="Disordered" evidence="2">
    <location>
        <begin position="1"/>
        <end position="25"/>
    </location>
</feature>
<feature type="compositionally biased region" description="Basic residues" evidence="2">
    <location>
        <begin position="11"/>
        <end position="25"/>
    </location>
</feature>
<feature type="active site" description="Proton acceptor" evidence="1">
    <location>
        <position position="184"/>
    </location>
</feature>
<feature type="binding site" evidence="1">
    <location>
        <position position="81"/>
    </location>
    <ligand>
        <name>S-adenosyl-L-methionine</name>
        <dbReference type="ChEBI" id="CHEBI:59789"/>
    </ligand>
</feature>
<feature type="binding site" evidence="1">
    <location>
        <position position="83"/>
    </location>
    <ligand>
        <name>S-adenosyl-L-methionine</name>
        <dbReference type="ChEBI" id="CHEBI:59789"/>
    </ligand>
</feature>
<feature type="binding site" evidence="1">
    <location>
        <position position="104"/>
    </location>
    <ligand>
        <name>S-adenosyl-L-methionine</name>
        <dbReference type="ChEBI" id="CHEBI:59789"/>
    </ligand>
</feature>
<feature type="binding site" evidence="1">
    <location>
        <position position="120"/>
    </location>
    <ligand>
        <name>S-adenosyl-L-methionine</name>
        <dbReference type="ChEBI" id="CHEBI:59789"/>
    </ligand>
</feature>
<feature type="binding site" evidence="1">
    <location>
        <position position="144"/>
    </location>
    <ligand>
        <name>S-adenosyl-L-methionine</name>
        <dbReference type="ChEBI" id="CHEBI:59789"/>
    </ligand>
</feature>
<sequence>MTKSPIGGNRSGRKLGQKVKKGKLKASSRRWLERHINDPYVQRAQLEGYRARAAFKLLEIDEKHKILAGARRIIDLGAAPGSWSQIAAKVTNSTDADPRVAAIDFLEMDPIPGVRFLQLDFLDPEAPEKLKEAIGGTPDLVLSDMAAPTTGHRQTDHLRTMHLCEVAAHFAVDVLAKGGHFLAKTFQGGTERDLLNMLKQNFSQVIHVKPASSRTESVEMFLLAKGFKGRRKAETEEPAEDAAAE</sequence>
<comment type="function">
    <text evidence="1">Specifically methylates the uridine in position 2552 of 23S rRNA at the 2'-O position of the ribose in the fully assembled 50S ribosomal subunit.</text>
</comment>
<comment type="catalytic activity">
    <reaction evidence="1">
        <text>uridine(2552) in 23S rRNA + S-adenosyl-L-methionine = 2'-O-methyluridine(2552) in 23S rRNA + S-adenosyl-L-homocysteine + H(+)</text>
        <dbReference type="Rhea" id="RHEA:42720"/>
        <dbReference type="Rhea" id="RHEA-COMP:10202"/>
        <dbReference type="Rhea" id="RHEA-COMP:10203"/>
        <dbReference type="ChEBI" id="CHEBI:15378"/>
        <dbReference type="ChEBI" id="CHEBI:57856"/>
        <dbReference type="ChEBI" id="CHEBI:59789"/>
        <dbReference type="ChEBI" id="CHEBI:65315"/>
        <dbReference type="ChEBI" id="CHEBI:74478"/>
        <dbReference type="EC" id="2.1.1.166"/>
    </reaction>
</comment>
<comment type="subcellular location">
    <subcellularLocation>
        <location evidence="1">Cytoplasm</location>
    </subcellularLocation>
</comment>
<comment type="similarity">
    <text evidence="1">Belongs to the class I-like SAM-binding methyltransferase superfamily. RNA methyltransferase RlmE family.</text>
</comment>